<keyword id="KW-0010">Activator</keyword>
<keyword id="KW-0238">DNA-binding</keyword>
<keyword id="KW-0479">Metal-binding</keyword>
<keyword id="KW-0539">Nucleus</keyword>
<keyword id="KW-0597">Phosphoprotein</keyword>
<keyword id="KW-1185">Reference proteome</keyword>
<keyword id="KW-0677">Repeat</keyword>
<keyword id="KW-0804">Transcription</keyword>
<keyword id="KW-0805">Transcription regulation</keyword>
<keyword id="KW-0862">Zinc</keyword>
<keyword id="KW-0863">Zinc-finger</keyword>
<accession>Q5E9U0</accession>
<accession>B0JYR4</accession>
<sequence length="613" mass="64718">MSDPQTSMAATAAVSPSDYLQPAASTTQDSQPSPLALLAATCSKIGPPAVEAAVTPPAPPQPTPRKLVPIKPAPLPLSPSKNSFGILSSKGNILQIQGSQLSTSYPGGQLVFAIQNPTVVNKGTRSNTSIQYQAVPQIQASSPQTIQVQPSLTNQIQIIPGTNQAIITPSPSSHKPVPIKPAPVQKSSTTTTPAQSGANVVKLTGGGGNVTLTLPVNNLVNTSDPGAATQLLTESPPAPLSKTNKKARKKSLPAAQPPVAVAEQVETVLIETTADNIIQAGNNLLIVQSPGGGQPAVVQQVQVVPPKAEQQQVVQIPQQALRVVQAASATLPTVPQKPSQNFQIQAAEPSPTQVYIRTPSGEVQTVLVQDSPPATAATASTTTCSSPASRAAHLSGTSKKHSAAILRKERPLPKIAPAGSIISLNAAQLAAAAQAMQTININGVQVQGVPVTITNTGGQQQLTVQNVSGNNLTISGLSPTQIQLQMEQALAGETQPGEKRRRMACTCPNCKDGDKRSGEQGKKKHVCHIPDCGKTFRKTSLLRAHVRLHTGERPFVCNWFFCGKRFTRSDELQRHARTHTGDKRFECAQCQKRFMRSDHLTKHYKTHLVTKNL</sequence>
<feature type="chain" id="PRO_0000269191" description="Transcription factor Sp2">
    <location>
        <begin position="1"/>
        <end position="613"/>
    </location>
</feature>
<feature type="zinc finger region" description="C2H2-type 1" evidence="3">
    <location>
        <begin position="525"/>
        <end position="549"/>
    </location>
</feature>
<feature type="zinc finger region" description="C2H2-type 2" evidence="3">
    <location>
        <begin position="555"/>
        <end position="579"/>
    </location>
</feature>
<feature type="zinc finger region" description="C2H2-type 3" evidence="3">
    <location>
        <begin position="585"/>
        <end position="607"/>
    </location>
</feature>
<feature type="region of interest" description="Disordered" evidence="4">
    <location>
        <begin position="1"/>
        <end position="32"/>
    </location>
</feature>
<feature type="region of interest" description="Disordered" evidence="4">
    <location>
        <begin position="170"/>
        <end position="197"/>
    </location>
</feature>
<feature type="region of interest" description="Disordered" evidence="4">
    <location>
        <begin position="225"/>
        <end position="255"/>
    </location>
</feature>
<feature type="region of interest" description="Disordered" evidence="4">
    <location>
        <begin position="374"/>
        <end position="402"/>
    </location>
</feature>
<feature type="short sequence motif" description="9aaTAD; inactive" evidence="2">
    <location>
        <begin position="361"/>
        <end position="369"/>
    </location>
</feature>
<feature type="compositionally biased region" description="Polar residues" evidence="4">
    <location>
        <begin position="23"/>
        <end position="32"/>
    </location>
</feature>
<feature type="compositionally biased region" description="Polar residues" evidence="4">
    <location>
        <begin position="185"/>
        <end position="197"/>
    </location>
</feature>
<feature type="compositionally biased region" description="Low complexity" evidence="4">
    <location>
        <begin position="374"/>
        <end position="392"/>
    </location>
</feature>
<feature type="modified residue" description="Phosphoserine" evidence="2">
    <location>
        <position position="78"/>
    </location>
</feature>
<proteinExistence type="evidence at transcript level"/>
<evidence type="ECO:0000250" key="1"/>
<evidence type="ECO:0000250" key="2">
    <source>
        <dbReference type="UniProtKB" id="Q02086"/>
    </source>
</evidence>
<evidence type="ECO:0000255" key="3">
    <source>
        <dbReference type="PROSITE-ProRule" id="PRU00042"/>
    </source>
</evidence>
<evidence type="ECO:0000256" key="4">
    <source>
        <dbReference type="SAM" id="MobiDB-lite"/>
    </source>
</evidence>
<evidence type="ECO:0000305" key="5"/>
<name>SP2_BOVIN</name>
<comment type="function">
    <text evidence="1">Binds to GC box promoters elements and selectively activates mRNA synthesis from genes that contain functional recognition sites.</text>
</comment>
<comment type="subcellular location">
    <subcellularLocation>
        <location evidence="1">Nucleus</location>
    </subcellularLocation>
</comment>
<comment type="domain">
    <text evidence="2">The 9aaTAD motif is a transactivation domain present in a large number of yeast and animal transcription factors. In SP2, the motif is inactive.</text>
</comment>
<comment type="similarity">
    <text evidence="5">Belongs to the Sp1 C2H2-type zinc-finger protein family.</text>
</comment>
<reference key="1">
    <citation type="journal article" date="2005" name="BMC Genomics">
        <title>Characterization of 954 bovine full-CDS cDNA sequences.</title>
        <authorList>
            <person name="Harhay G.P."/>
            <person name="Sonstegard T.S."/>
            <person name="Keele J.W."/>
            <person name="Heaton M.P."/>
            <person name="Clawson M.L."/>
            <person name="Snelling W.M."/>
            <person name="Wiedmann R.T."/>
            <person name="Van Tassell C.P."/>
            <person name="Smith T.P.L."/>
        </authorList>
    </citation>
    <scope>NUCLEOTIDE SEQUENCE [LARGE SCALE MRNA]</scope>
</reference>
<reference key="2">
    <citation type="submission" date="2007-07" db="EMBL/GenBank/DDBJ databases">
        <authorList>
            <consortium name="NIH - Mammalian Gene Collection (MGC) project"/>
        </authorList>
    </citation>
    <scope>NUCLEOTIDE SEQUENCE [LARGE SCALE MRNA]</scope>
    <source>
        <strain>Hereford</strain>
        <tissue>Thymus</tissue>
    </source>
</reference>
<dbReference type="EMBL" id="BT020830">
    <property type="protein sequence ID" value="AAX08847.1"/>
    <property type="molecule type" value="mRNA"/>
</dbReference>
<dbReference type="EMBL" id="BC151610">
    <property type="protein sequence ID" value="AAI51611.1"/>
    <property type="molecule type" value="mRNA"/>
</dbReference>
<dbReference type="RefSeq" id="NP_001015654.1">
    <property type="nucleotide sequence ID" value="NM_001015654.1"/>
</dbReference>
<dbReference type="RefSeq" id="NP_001421977.1">
    <property type="nucleotide sequence ID" value="NM_001435048.1"/>
</dbReference>
<dbReference type="RefSeq" id="XP_005220643.1">
    <property type="nucleotide sequence ID" value="XM_005220586.3"/>
</dbReference>
<dbReference type="SMR" id="Q5E9U0"/>
<dbReference type="FunCoup" id="Q5E9U0">
    <property type="interactions" value="2479"/>
</dbReference>
<dbReference type="STRING" id="9913.ENSBTAP00000054632"/>
<dbReference type="PaxDb" id="9913-ENSBTAP00000018253"/>
<dbReference type="GeneID" id="534403"/>
<dbReference type="KEGG" id="bta:534403"/>
<dbReference type="CTD" id="6668"/>
<dbReference type="eggNOG" id="KOG1721">
    <property type="taxonomic scope" value="Eukaryota"/>
</dbReference>
<dbReference type="HOGENOM" id="CLU_034267_0_0_1"/>
<dbReference type="InParanoid" id="Q5E9U0"/>
<dbReference type="OrthoDB" id="6365676at2759"/>
<dbReference type="TreeFam" id="TF350150"/>
<dbReference type="Proteomes" id="UP000009136">
    <property type="component" value="Unplaced"/>
</dbReference>
<dbReference type="GO" id="GO:0005634">
    <property type="term" value="C:nucleus"/>
    <property type="evidence" value="ECO:0007669"/>
    <property type="project" value="UniProtKB-SubCell"/>
</dbReference>
<dbReference type="GO" id="GO:0000981">
    <property type="term" value="F:DNA-binding transcription factor activity, RNA polymerase II-specific"/>
    <property type="evidence" value="ECO:0000318"/>
    <property type="project" value="GO_Central"/>
</dbReference>
<dbReference type="GO" id="GO:0000978">
    <property type="term" value="F:RNA polymerase II cis-regulatory region sequence-specific DNA binding"/>
    <property type="evidence" value="ECO:0000318"/>
    <property type="project" value="GO_Central"/>
</dbReference>
<dbReference type="GO" id="GO:0008270">
    <property type="term" value="F:zinc ion binding"/>
    <property type="evidence" value="ECO:0007669"/>
    <property type="project" value="UniProtKB-KW"/>
</dbReference>
<dbReference type="GO" id="GO:0006357">
    <property type="term" value="P:regulation of transcription by RNA polymerase II"/>
    <property type="evidence" value="ECO:0000318"/>
    <property type="project" value="GO_Central"/>
</dbReference>
<dbReference type="CDD" id="cd22540">
    <property type="entry name" value="SP2_N"/>
    <property type="match status" value="1"/>
</dbReference>
<dbReference type="FunFam" id="3.30.160.60:FF:000421">
    <property type="entry name" value="Sp2 transcription factor"/>
    <property type="match status" value="1"/>
</dbReference>
<dbReference type="FunFam" id="3.30.160.60:FF:000455">
    <property type="entry name" value="Transcription factor Sp2"/>
    <property type="match status" value="1"/>
</dbReference>
<dbReference type="FunFam" id="3.30.160.60:FF:000014">
    <property type="entry name" value="Transcription factor Sp3"/>
    <property type="match status" value="1"/>
</dbReference>
<dbReference type="Gene3D" id="3.30.160.60">
    <property type="entry name" value="Classic Zinc Finger"/>
    <property type="match status" value="3"/>
</dbReference>
<dbReference type="InterPro" id="IPR036236">
    <property type="entry name" value="Znf_C2H2_sf"/>
</dbReference>
<dbReference type="InterPro" id="IPR013087">
    <property type="entry name" value="Znf_C2H2_type"/>
</dbReference>
<dbReference type="PANTHER" id="PTHR23235">
    <property type="entry name" value="KRUEPPEL-LIKE TRANSCRIPTION FACTOR"/>
    <property type="match status" value="1"/>
</dbReference>
<dbReference type="PANTHER" id="PTHR23235:SF1">
    <property type="entry name" value="TRANSCRIPTION FACTOR SP2"/>
    <property type="match status" value="1"/>
</dbReference>
<dbReference type="Pfam" id="PF00096">
    <property type="entry name" value="zf-C2H2"/>
    <property type="match status" value="3"/>
</dbReference>
<dbReference type="SMART" id="SM00355">
    <property type="entry name" value="ZnF_C2H2"/>
    <property type="match status" value="3"/>
</dbReference>
<dbReference type="SUPFAM" id="SSF57667">
    <property type="entry name" value="beta-beta-alpha zinc fingers"/>
    <property type="match status" value="3"/>
</dbReference>
<dbReference type="PROSITE" id="PS00028">
    <property type="entry name" value="ZINC_FINGER_C2H2_1"/>
    <property type="match status" value="3"/>
</dbReference>
<dbReference type="PROSITE" id="PS50157">
    <property type="entry name" value="ZINC_FINGER_C2H2_2"/>
    <property type="match status" value="3"/>
</dbReference>
<organism>
    <name type="scientific">Bos taurus</name>
    <name type="common">Bovine</name>
    <dbReference type="NCBI Taxonomy" id="9913"/>
    <lineage>
        <taxon>Eukaryota</taxon>
        <taxon>Metazoa</taxon>
        <taxon>Chordata</taxon>
        <taxon>Craniata</taxon>
        <taxon>Vertebrata</taxon>
        <taxon>Euteleostomi</taxon>
        <taxon>Mammalia</taxon>
        <taxon>Eutheria</taxon>
        <taxon>Laurasiatheria</taxon>
        <taxon>Artiodactyla</taxon>
        <taxon>Ruminantia</taxon>
        <taxon>Pecora</taxon>
        <taxon>Bovidae</taxon>
        <taxon>Bovinae</taxon>
        <taxon>Bos</taxon>
    </lineage>
</organism>
<gene>
    <name type="primary">SP2</name>
</gene>
<protein>
    <recommendedName>
        <fullName>Transcription factor Sp2</fullName>
    </recommendedName>
</protein>